<sequence>MRNRGFGRRELLVAMAMLVSVTGCARHASGARPASTTLPAGADLADRFAELERRYDARLGVYVPATGTTAAIEYRADERFAFCSTFKAPLVAAVLHQNPLTHLDKLITYTSDDIRSISPVAQQHVQTGMTIGQLCDAAIRYSDGTAANLLLADLGGPGGGTAAFTGYLRSLGDTVSRLDAEEPELNRDPPGDERDTTTPHAIALVLQQLVLGNALPPDKRALLTDWMARNTTGAKRIRAGFPADWKVIDKTGTGDYGRANDIAVVWSPTGVPYVVAVMSDRAGGGYDAEPREALLAEAATCVAGVLA</sequence>
<keyword id="KW-0002">3D-structure</keyword>
<keyword id="KW-0046">Antibiotic resistance</keyword>
<keyword id="KW-0997">Cell inner membrane</keyword>
<keyword id="KW-1003">Cell membrane</keyword>
<keyword id="KW-0378">Hydrolase</keyword>
<keyword id="KW-0472">Membrane</keyword>
<keyword id="KW-0574">Periplasm</keyword>
<keyword id="KW-1185">Reference proteome</keyword>
<keyword id="KW-0964">Secreted</keyword>
<keyword id="KW-0732">Signal</keyword>
<proteinExistence type="evidence at protein level"/>
<dbReference type="EC" id="3.5.2.6" evidence="5 6 8 9"/>
<dbReference type="EMBL" id="AL123456">
    <property type="protein sequence ID" value="CCP44842.1"/>
    <property type="molecule type" value="Genomic_DNA"/>
</dbReference>
<dbReference type="PIR" id="G70764">
    <property type="entry name" value="G70764"/>
</dbReference>
<dbReference type="RefSeq" id="NP_216584.1">
    <property type="nucleotide sequence ID" value="NC_000962.3"/>
</dbReference>
<dbReference type="RefSeq" id="WP_003410677.1">
    <property type="nucleotide sequence ID" value="NZ_NVQJ01000047.1"/>
</dbReference>
<dbReference type="PDB" id="2GDN">
    <property type="method" value="X-ray"/>
    <property type="resolution" value="1.72 A"/>
    <property type="chains" value="A=41-307"/>
</dbReference>
<dbReference type="PDB" id="3CG5">
    <property type="method" value="X-ray"/>
    <property type="resolution" value="1.70 A"/>
    <property type="chains" value="A=43-307"/>
</dbReference>
<dbReference type="PDB" id="3DWZ">
    <property type="method" value="X-ray"/>
    <property type="resolution" value="1.80 A"/>
    <property type="chains" value="A=43-307"/>
</dbReference>
<dbReference type="PDB" id="3IQA">
    <property type="method" value="X-ray"/>
    <property type="resolution" value="2.20 A"/>
    <property type="chains" value="A=43-307"/>
</dbReference>
<dbReference type="PDB" id="3M6B">
    <property type="method" value="X-ray"/>
    <property type="resolution" value="1.30 A"/>
    <property type="chains" value="A=43-307"/>
</dbReference>
<dbReference type="PDB" id="3M6H">
    <property type="method" value="X-ray"/>
    <property type="resolution" value="1.99 A"/>
    <property type="chains" value="A=43-307"/>
</dbReference>
<dbReference type="PDB" id="3N6I">
    <property type="method" value="X-ray"/>
    <property type="resolution" value="2.00 A"/>
    <property type="chains" value="A=43-307"/>
</dbReference>
<dbReference type="PDB" id="3N7W">
    <property type="method" value="X-ray"/>
    <property type="resolution" value="1.70 A"/>
    <property type="chains" value="A=43-307"/>
</dbReference>
<dbReference type="PDB" id="3N8L">
    <property type="method" value="X-ray"/>
    <property type="resolution" value="1.40 A"/>
    <property type="chains" value="A=43-307"/>
</dbReference>
<dbReference type="PDB" id="3N8R">
    <property type="method" value="X-ray"/>
    <property type="resolution" value="1.41 A"/>
    <property type="chains" value="A=43-307"/>
</dbReference>
<dbReference type="PDB" id="3N8S">
    <property type="method" value="X-ray"/>
    <property type="resolution" value="2.00 A"/>
    <property type="chains" value="A=43-307"/>
</dbReference>
<dbReference type="PDB" id="3NBL">
    <property type="method" value="X-ray"/>
    <property type="resolution" value="2.00 A"/>
    <property type="chains" value="A=43-307"/>
</dbReference>
<dbReference type="PDB" id="3NC8">
    <property type="method" value="X-ray"/>
    <property type="resolution" value="1.50 A"/>
    <property type="chains" value="A=43-307"/>
</dbReference>
<dbReference type="PDB" id="3NCK">
    <property type="method" value="X-ray"/>
    <property type="resolution" value="2.80 A"/>
    <property type="chains" value="A=43-307"/>
</dbReference>
<dbReference type="PDB" id="3NDE">
    <property type="method" value="X-ray"/>
    <property type="resolution" value="1.70 A"/>
    <property type="chains" value="A=43-307"/>
</dbReference>
<dbReference type="PDB" id="3NDG">
    <property type="method" value="X-ray"/>
    <property type="resolution" value="1.90 A"/>
    <property type="chains" value="A=43-307"/>
</dbReference>
<dbReference type="PDB" id="3NY4">
    <property type="method" value="X-ray"/>
    <property type="resolution" value="1.22 A"/>
    <property type="chains" value="A=43-307"/>
</dbReference>
<dbReference type="PDB" id="3VFF">
    <property type="method" value="X-ray"/>
    <property type="resolution" value="2.78 A"/>
    <property type="chains" value="A/B/C/D=43-307"/>
</dbReference>
<dbReference type="PDB" id="3VFH">
    <property type="method" value="X-ray"/>
    <property type="resolution" value="2.57 A"/>
    <property type="chains" value="A/B/C/D=43-307"/>
</dbReference>
<dbReference type="PDB" id="3ZHH">
    <property type="method" value="X-ray"/>
    <property type="resolution" value="2.85 A"/>
    <property type="chains" value="A/B/C/D=32-307"/>
</dbReference>
<dbReference type="PDB" id="4DF6">
    <property type="method" value="X-ray"/>
    <property type="resolution" value="2.29 A"/>
    <property type="chains" value="A=43-307"/>
</dbReference>
<dbReference type="PDB" id="4EBL">
    <property type="method" value="X-ray"/>
    <property type="resolution" value="2.10 A"/>
    <property type="chains" value="A/B/C/D=43-307"/>
</dbReference>
<dbReference type="PDB" id="4EBN">
    <property type="method" value="X-ray"/>
    <property type="resolution" value="2.85 A"/>
    <property type="chains" value="A/B/C/D=43-307"/>
</dbReference>
<dbReference type="PDB" id="4EBP">
    <property type="method" value="X-ray"/>
    <property type="resolution" value="2.29 A"/>
    <property type="chains" value="A/B/C/D=43-307"/>
</dbReference>
<dbReference type="PDB" id="4JLF">
    <property type="method" value="X-ray"/>
    <property type="resolution" value="2.10 A"/>
    <property type="chains" value="A=43-307"/>
</dbReference>
<dbReference type="PDB" id="4Q8I">
    <property type="method" value="X-ray"/>
    <property type="resolution" value="1.90 A"/>
    <property type="chains" value="A=41-307"/>
</dbReference>
<dbReference type="PDB" id="4QB8">
    <property type="method" value="X-ray"/>
    <property type="resolution" value="1.76 A"/>
    <property type="chains" value="A=42-307"/>
</dbReference>
<dbReference type="PDB" id="4QHC">
    <property type="method" value="X-ray"/>
    <property type="resolution" value="1.90 A"/>
    <property type="chains" value="A=42-307"/>
</dbReference>
<dbReference type="PDB" id="4X6T">
    <property type="method" value="X-ray"/>
    <property type="resolution" value="1.40 A"/>
    <property type="chains" value="A=45-307"/>
</dbReference>
<dbReference type="PDB" id="5NJ2">
    <property type="method" value="X-ray"/>
    <property type="resolution" value="1.19 A"/>
    <property type="chains" value="A/B=43-307"/>
</dbReference>
<dbReference type="PDB" id="5OYO">
    <property type="method" value="X-ray"/>
    <property type="resolution" value="2.10 A"/>
    <property type="chains" value="A/B=43-307"/>
</dbReference>
<dbReference type="PDB" id="6B5X">
    <property type="method" value="X-ray"/>
    <property type="resolution" value="2.45 A"/>
    <property type="chains" value="A/B/C/D=41-307"/>
</dbReference>
<dbReference type="PDB" id="6B5Y">
    <property type="method" value="X-ray"/>
    <property type="resolution" value="2.75 A"/>
    <property type="chains" value="A/B/C/D=41-307"/>
</dbReference>
<dbReference type="PDB" id="6B68">
    <property type="method" value="X-ray"/>
    <property type="resolution" value="2.15 A"/>
    <property type="chains" value="A/B/C/D=41-307"/>
</dbReference>
<dbReference type="PDB" id="6B69">
    <property type="method" value="X-ray"/>
    <property type="resolution" value="2.20 A"/>
    <property type="chains" value="A/B/C/D=41-307"/>
</dbReference>
<dbReference type="PDB" id="6B6A">
    <property type="method" value="X-ray"/>
    <property type="resolution" value="2.30 A"/>
    <property type="chains" value="A/B/C/D=41-307"/>
</dbReference>
<dbReference type="PDB" id="6B6B">
    <property type="method" value="X-ray"/>
    <property type="resolution" value="1.80 A"/>
    <property type="chains" value="A=41-307"/>
</dbReference>
<dbReference type="PDB" id="6B6C">
    <property type="method" value="X-ray"/>
    <property type="resolution" value="1.90 A"/>
    <property type="chains" value="A=41-307"/>
</dbReference>
<dbReference type="PDB" id="6B6D">
    <property type="method" value="X-ray"/>
    <property type="resolution" value="1.80 A"/>
    <property type="chains" value="A=41-307"/>
</dbReference>
<dbReference type="PDB" id="6B6E">
    <property type="method" value="X-ray"/>
    <property type="resolution" value="1.90 A"/>
    <property type="chains" value="A=41-307"/>
</dbReference>
<dbReference type="PDB" id="6B6F">
    <property type="method" value="X-ray"/>
    <property type="resolution" value="2.05 A"/>
    <property type="chains" value="A=41-307"/>
</dbReference>
<dbReference type="PDB" id="6H27">
    <property type="method" value="X-ray"/>
    <property type="resolution" value="1.63 A"/>
    <property type="chains" value="A/B=43-307"/>
</dbReference>
<dbReference type="PDB" id="6N14">
    <property type="method" value="X-ray"/>
    <property type="resolution" value="1.52 A"/>
    <property type="chains" value="A=39-307"/>
</dbReference>
<dbReference type="PDB" id="7A5T">
    <property type="method" value="X-ray"/>
    <property type="resolution" value="1.40 A"/>
    <property type="chains" value="A=43-307"/>
</dbReference>
<dbReference type="PDB" id="7A5U">
    <property type="method" value="X-ray"/>
    <property type="resolution" value="1.50 A"/>
    <property type="chains" value="A=43-307"/>
</dbReference>
<dbReference type="PDB" id="7A5W">
    <property type="method" value="X-ray"/>
    <property type="resolution" value="1.40 A"/>
    <property type="chains" value="A=43-307"/>
</dbReference>
<dbReference type="PDB" id="7A6Z">
    <property type="method" value="X-ray"/>
    <property type="resolution" value="1.30 A"/>
    <property type="chains" value="A=43-307"/>
</dbReference>
<dbReference type="PDB" id="7A71">
    <property type="method" value="X-ray"/>
    <property type="resolution" value="1.40 A"/>
    <property type="chains" value="A=43-307"/>
</dbReference>
<dbReference type="PDB" id="7A72">
    <property type="method" value="X-ray"/>
    <property type="resolution" value="1.30 A"/>
    <property type="chains" value="A=43-307"/>
</dbReference>
<dbReference type="PDB" id="7A74">
    <property type="method" value="X-ray"/>
    <property type="resolution" value="1.60 A"/>
    <property type="chains" value="A=41-307"/>
</dbReference>
<dbReference type="PDB" id="7K8E">
    <property type="method" value="X-ray"/>
    <property type="resolution" value="2.40 A"/>
    <property type="chains" value="A/B/C/D=41-307"/>
</dbReference>
<dbReference type="PDB" id="7K8F">
    <property type="method" value="X-ray"/>
    <property type="resolution" value="2.60 A"/>
    <property type="chains" value="A/B/C/D=41-307"/>
</dbReference>
<dbReference type="PDB" id="7K8H">
    <property type="method" value="X-ray"/>
    <property type="resolution" value="2.60 A"/>
    <property type="chains" value="A/B/C/D=41-307"/>
</dbReference>
<dbReference type="PDB" id="7K8K">
    <property type="method" value="X-ray"/>
    <property type="resolution" value="2.70 A"/>
    <property type="chains" value="A/B/C/D=41-307"/>
</dbReference>
<dbReference type="PDB" id="7K8L">
    <property type="method" value="X-ray"/>
    <property type="resolution" value="2.80 A"/>
    <property type="chains" value="A/B/C/D=41-307"/>
</dbReference>
<dbReference type="PDB" id="8BTU">
    <property type="method" value="X-ray"/>
    <property type="resolution" value="1.80 A"/>
    <property type="chains" value="A=43-307"/>
</dbReference>
<dbReference type="PDB" id="8BTV">
    <property type="method" value="X-ray"/>
    <property type="resolution" value="1.95 A"/>
    <property type="chains" value="A=43-307"/>
</dbReference>
<dbReference type="PDB" id="8BTW">
    <property type="method" value="X-ray"/>
    <property type="resolution" value="1.90 A"/>
    <property type="chains" value="A=43-307"/>
</dbReference>
<dbReference type="PDB" id="8BV4">
    <property type="method" value="X-ray"/>
    <property type="resolution" value="1.95 A"/>
    <property type="chains" value="A=43-307"/>
</dbReference>
<dbReference type="PDB" id="8EBI">
    <property type="method" value="X-ray"/>
    <property type="resolution" value="2.70 A"/>
    <property type="chains" value="A/B/C/D=41-307"/>
</dbReference>
<dbReference type="PDB" id="8EBR">
    <property type="method" value="X-ray"/>
    <property type="resolution" value="2.80 A"/>
    <property type="chains" value="A/B/C/D=41-307"/>
</dbReference>
<dbReference type="PDB" id="8EC4">
    <property type="method" value="X-ray"/>
    <property type="resolution" value="2.35 A"/>
    <property type="chains" value="A/B/C/D=41-307"/>
</dbReference>
<dbReference type="PDB" id="8ECF">
    <property type="method" value="X-ray"/>
    <property type="resolution" value="2.74 A"/>
    <property type="chains" value="A/B/C/D=41-307"/>
</dbReference>
<dbReference type="PDB" id="8GCS">
    <property type="method" value="X-ray"/>
    <property type="resolution" value="2.62 A"/>
    <property type="chains" value="A/B/C/D=41-307"/>
</dbReference>
<dbReference type="PDB" id="8GCT">
    <property type="method" value="X-ray"/>
    <property type="resolution" value="2.75 A"/>
    <property type="chains" value="A/B/C/D=41-307"/>
</dbReference>
<dbReference type="PDB" id="8GCV">
    <property type="method" value="X-ray"/>
    <property type="resolution" value="2.20 A"/>
    <property type="chains" value="A/B/C/D=41-307"/>
</dbReference>
<dbReference type="PDB" id="8GCX">
    <property type="method" value="X-ray"/>
    <property type="resolution" value="3.20 A"/>
    <property type="chains" value="A/B/C/D=41-307"/>
</dbReference>
<dbReference type="PDB" id="8OE1">
    <property type="method" value="X-ray"/>
    <property type="resolution" value="1.90 A"/>
    <property type="chains" value="A/C=43-307"/>
</dbReference>
<dbReference type="PDB" id="8OE5">
    <property type="method" value="X-ray"/>
    <property type="resolution" value="1.80 A"/>
    <property type="chains" value="A/C=43-307"/>
</dbReference>
<dbReference type="PDB" id="8R88">
    <property type="method" value="X-ray"/>
    <property type="resolution" value="1.95 A"/>
    <property type="chains" value="A/B/C/D=43-307"/>
</dbReference>
<dbReference type="PDB" id="8RFZ">
    <property type="method" value="X-ray"/>
    <property type="resolution" value="1.42 A"/>
    <property type="chains" value="A=43-307"/>
</dbReference>
<dbReference type="PDB" id="8RG2">
    <property type="method" value="X-ray"/>
    <property type="resolution" value="1.80 A"/>
    <property type="chains" value="A=43-307"/>
</dbReference>
<dbReference type="PDB" id="8RII">
    <property type="method" value="X-ray"/>
    <property type="resolution" value="2.30 A"/>
    <property type="chains" value="A=43-307"/>
</dbReference>
<dbReference type="PDBsum" id="2GDN"/>
<dbReference type="PDBsum" id="3CG5"/>
<dbReference type="PDBsum" id="3DWZ"/>
<dbReference type="PDBsum" id="3IQA"/>
<dbReference type="PDBsum" id="3M6B"/>
<dbReference type="PDBsum" id="3M6H"/>
<dbReference type="PDBsum" id="3N6I"/>
<dbReference type="PDBsum" id="3N7W"/>
<dbReference type="PDBsum" id="3N8L"/>
<dbReference type="PDBsum" id="3N8R"/>
<dbReference type="PDBsum" id="3N8S"/>
<dbReference type="PDBsum" id="3NBL"/>
<dbReference type="PDBsum" id="3NC8"/>
<dbReference type="PDBsum" id="3NCK"/>
<dbReference type="PDBsum" id="3NDE"/>
<dbReference type="PDBsum" id="3NDG"/>
<dbReference type="PDBsum" id="3NY4"/>
<dbReference type="PDBsum" id="3VFF"/>
<dbReference type="PDBsum" id="3VFH"/>
<dbReference type="PDBsum" id="3ZHH"/>
<dbReference type="PDBsum" id="4DF6"/>
<dbReference type="PDBsum" id="4EBL"/>
<dbReference type="PDBsum" id="4EBN"/>
<dbReference type="PDBsum" id="4EBP"/>
<dbReference type="PDBsum" id="4JLF"/>
<dbReference type="PDBsum" id="4Q8I"/>
<dbReference type="PDBsum" id="4QB8"/>
<dbReference type="PDBsum" id="4QHC"/>
<dbReference type="PDBsum" id="4X6T"/>
<dbReference type="PDBsum" id="5NJ2"/>
<dbReference type="PDBsum" id="5OYO"/>
<dbReference type="PDBsum" id="6B5X"/>
<dbReference type="PDBsum" id="6B5Y"/>
<dbReference type="PDBsum" id="6B68"/>
<dbReference type="PDBsum" id="6B69"/>
<dbReference type="PDBsum" id="6B6A"/>
<dbReference type="PDBsum" id="6B6B"/>
<dbReference type="PDBsum" id="6B6C"/>
<dbReference type="PDBsum" id="6B6D"/>
<dbReference type="PDBsum" id="6B6E"/>
<dbReference type="PDBsum" id="6B6F"/>
<dbReference type="PDBsum" id="6H27"/>
<dbReference type="PDBsum" id="6N14"/>
<dbReference type="PDBsum" id="7A5T"/>
<dbReference type="PDBsum" id="7A5U"/>
<dbReference type="PDBsum" id="7A5W"/>
<dbReference type="PDBsum" id="7A6Z"/>
<dbReference type="PDBsum" id="7A71"/>
<dbReference type="PDBsum" id="7A72"/>
<dbReference type="PDBsum" id="7A74"/>
<dbReference type="PDBsum" id="7K8E"/>
<dbReference type="PDBsum" id="7K8F"/>
<dbReference type="PDBsum" id="7K8H"/>
<dbReference type="PDBsum" id="7K8K"/>
<dbReference type="PDBsum" id="7K8L"/>
<dbReference type="PDBsum" id="8BTU"/>
<dbReference type="PDBsum" id="8BTV"/>
<dbReference type="PDBsum" id="8BTW"/>
<dbReference type="PDBsum" id="8BV4"/>
<dbReference type="PDBsum" id="8EBI"/>
<dbReference type="PDBsum" id="8EBR"/>
<dbReference type="PDBsum" id="8EC4"/>
<dbReference type="PDBsum" id="8ECF"/>
<dbReference type="PDBsum" id="8GCS"/>
<dbReference type="PDBsum" id="8GCT"/>
<dbReference type="PDBsum" id="8GCV"/>
<dbReference type="PDBsum" id="8GCX"/>
<dbReference type="PDBsum" id="8OE1"/>
<dbReference type="PDBsum" id="8OE5"/>
<dbReference type="PDBsum" id="8R88"/>
<dbReference type="PDBsum" id="8RFZ"/>
<dbReference type="PDBsum" id="8RG2"/>
<dbReference type="PDBsum" id="8RII"/>
<dbReference type="SMR" id="P9WKD3"/>
<dbReference type="STRING" id="83332.Rv2068c"/>
<dbReference type="CARD" id="ARO:3007182">
    <property type="molecule name" value="blaC"/>
    <property type="mechanism identifier" value="ARO:0001004"/>
    <property type="mechanism name" value="antibiotic inactivation"/>
</dbReference>
<dbReference type="PaxDb" id="83332-Rv2068c"/>
<dbReference type="DNASU" id="888742"/>
<dbReference type="GeneID" id="45426045"/>
<dbReference type="GeneID" id="888742"/>
<dbReference type="KEGG" id="mtu:Rv2068c"/>
<dbReference type="KEGG" id="mtv:RVBD_2068c"/>
<dbReference type="TubercuList" id="Rv2068c"/>
<dbReference type="eggNOG" id="COG2367">
    <property type="taxonomic scope" value="Bacteria"/>
</dbReference>
<dbReference type="InParanoid" id="P9WKD3"/>
<dbReference type="OrthoDB" id="9784149at2"/>
<dbReference type="PhylomeDB" id="P9WKD3"/>
<dbReference type="BRENDA" id="3.5.2.6">
    <property type="organism ID" value="3445"/>
</dbReference>
<dbReference type="SABIO-RK" id="P9WKD3"/>
<dbReference type="EvolutionaryTrace" id="P9WKD3"/>
<dbReference type="Proteomes" id="UP000001584">
    <property type="component" value="Chromosome"/>
</dbReference>
<dbReference type="GO" id="GO:0005576">
    <property type="term" value="C:extracellular region"/>
    <property type="evidence" value="ECO:0000314"/>
    <property type="project" value="MTBBASE"/>
</dbReference>
<dbReference type="GO" id="GO:0042597">
    <property type="term" value="C:periplasmic space"/>
    <property type="evidence" value="ECO:0007669"/>
    <property type="project" value="UniProtKB-SubCell"/>
</dbReference>
<dbReference type="GO" id="GO:0005886">
    <property type="term" value="C:plasma membrane"/>
    <property type="evidence" value="ECO:0007005"/>
    <property type="project" value="MTBBASE"/>
</dbReference>
<dbReference type="GO" id="GO:0008800">
    <property type="term" value="F:beta-lactamase activity"/>
    <property type="evidence" value="ECO:0000314"/>
    <property type="project" value="MTBBASE"/>
</dbReference>
<dbReference type="GO" id="GO:0030655">
    <property type="term" value="P:beta-lactam antibiotic catabolic process"/>
    <property type="evidence" value="ECO:0000315"/>
    <property type="project" value="MTBBASE"/>
</dbReference>
<dbReference type="GO" id="GO:0046677">
    <property type="term" value="P:response to antibiotic"/>
    <property type="evidence" value="ECO:0000315"/>
    <property type="project" value="MTBBASE"/>
</dbReference>
<dbReference type="FunFam" id="3.40.710.10:FF:000033">
    <property type="entry name" value="Beta-lactamase"/>
    <property type="match status" value="1"/>
</dbReference>
<dbReference type="Gene3D" id="3.40.710.10">
    <property type="entry name" value="DD-peptidase/beta-lactamase superfamily"/>
    <property type="match status" value="1"/>
</dbReference>
<dbReference type="InterPro" id="IPR012338">
    <property type="entry name" value="Beta-lactam/transpept-like"/>
</dbReference>
<dbReference type="InterPro" id="IPR045155">
    <property type="entry name" value="Beta-lactam_cat"/>
</dbReference>
<dbReference type="InterPro" id="IPR000871">
    <property type="entry name" value="Beta-lactam_class-A"/>
</dbReference>
<dbReference type="InterPro" id="IPR023650">
    <property type="entry name" value="Beta-lactam_class-A_AS"/>
</dbReference>
<dbReference type="NCBIfam" id="NF033103">
    <property type="entry name" value="bla_class_A"/>
    <property type="match status" value="1"/>
</dbReference>
<dbReference type="NCBIfam" id="NF041154">
    <property type="entry name" value="MTB_classA_BlaC"/>
    <property type="match status" value="1"/>
</dbReference>
<dbReference type="PANTHER" id="PTHR35333">
    <property type="entry name" value="BETA-LACTAMASE"/>
    <property type="match status" value="1"/>
</dbReference>
<dbReference type="PANTHER" id="PTHR35333:SF3">
    <property type="entry name" value="BETA-LACTAMASE-TYPE TRANSPEPTIDASE FOLD CONTAINING PROTEIN"/>
    <property type="match status" value="1"/>
</dbReference>
<dbReference type="Pfam" id="PF13354">
    <property type="entry name" value="Beta-lactamase2"/>
    <property type="match status" value="1"/>
</dbReference>
<dbReference type="PRINTS" id="PR00118">
    <property type="entry name" value="BLACTAMASEA"/>
</dbReference>
<dbReference type="SUPFAM" id="SSF56601">
    <property type="entry name" value="beta-lactamase/transpeptidase-like"/>
    <property type="match status" value="1"/>
</dbReference>
<dbReference type="PROSITE" id="PS00146">
    <property type="entry name" value="BETA_LACTAMASE_A"/>
    <property type="match status" value="1"/>
</dbReference>
<accession>P9WKD3</accession>
<accession>L0T8I9</accession>
<accession>P0A5I6</accession>
<accession>P0C5C1</accession>
<accession>Q10670</accession>
<name>BLAC_MYCTU</name>
<gene>
    <name evidence="16" type="primary">blaC</name>
    <name type="synonym">blaA</name>
    <name type="ordered locus">Rv2068c</name>
    <name type="ORF">MTCY49.07c</name>
</gene>
<reference key="1">
    <citation type="journal article" date="1998" name="Nature">
        <title>Deciphering the biology of Mycobacterium tuberculosis from the complete genome sequence.</title>
        <authorList>
            <person name="Cole S.T."/>
            <person name="Brosch R."/>
            <person name="Parkhill J."/>
            <person name="Garnier T."/>
            <person name="Churcher C.M."/>
            <person name="Harris D.E."/>
            <person name="Gordon S.V."/>
            <person name="Eiglmeier K."/>
            <person name="Gas S."/>
            <person name="Barry C.E. III"/>
            <person name="Tekaia F."/>
            <person name="Badcock K."/>
            <person name="Basham D."/>
            <person name="Brown D."/>
            <person name="Chillingworth T."/>
            <person name="Connor R."/>
            <person name="Davies R.M."/>
            <person name="Devlin K."/>
            <person name="Feltwell T."/>
            <person name="Gentles S."/>
            <person name="Hamlin N."/>
            <person name="Holroyd S."/>
            <person name="Hornsby T."/>
            <person name="Jagels K."/>
            <person name="Krogh A."/>
            <person name="McLean J."/>
            <person name="Moule S."/>
            <person name="Murphy L.D."/>
            <person name="Oliver S."/>
            <person name="Osborne J."/>
            <person name="Quail M.A."/>
            <person name="Rajandream M.A."/>
            <person name="Rogers J."/>
            <person name="Rutter S."/>
            <person name="Seeger K."/>
            <person name="Skelton S."/>
            <person name="Squares S."/>
            <person name="Squares R."/>
            <person name="Sulston J.E."/>
            <person name="Taylor K."/>
            <person name="Whitehead S."/>
            <person name="Barrell B.G."/>
        </authorList>
    </citation>
    <scope>NUCLEOTIDE SEQUENCE [LARGE SCALE GENOMIC DNA]</scope>
    <source>
        <strain>ATCC 25618 / H37Rv</strain>
    </source>
</reference>
<reference key="2">
    <citation type="journal article" date="1991" name="Biochem. J.">
        <title>A standard numbering scheme for the class A beta-lactamases.</title>
        <authorList>
            <person name="Ambler R.P."/>
            <person name="Coulson A.F."/>
            <person name="Frere J.M."/>
            <person name="Ghuysen J.M."/>
            <person name="Joris B."/>
            <person name="Forsman M."/>
            <person name="Levesque R.C."/>
            <person name="Tiraby G."/>
            <person name="Waley S.G."/>
        </authorList>
    </citation>
    <scope>AMINO ACID NUMBERING SCHEME</scope>
</reference>
<reference key="3">
    <citation type="journal article" date="2005" name="J. Bacteriol.">
        <title>The twin-arginine translocation pathway of Mycobacterium smegmatis is functional and required for the export of mycobacterial beta-lactamases.</title>
        <authorList>
            <person name="McDonough J.A."/>
            <person name="Hacker K.E."/>
            <person name="Flores A.R."/>
            <person name="Pavelka M.S. Jr."/>
            <person name="Braunstein M."/>
        </authorList>
    </citation>
    <scope>EXPORT VIA THE TAT-SYSTEM</scope>
    <scope>MUTAGENESIS OF 8-ARG-ARG-9</scope>
    <scope>SUBCELLULAR LOCATION</scope>
    <source>
        <strain>ATCC 25618 / H37Rv</strain>
    </source>
</reference>
<reference key="4">
    <citation type="journal article" date="2005" name="Microbiology">
        <title>Genetic analysis of the beta-lactamases of Mycobacterium tuberculosis and Mycobacterium smegmatis and susceptibility to beta-lactam antibiotics.</title>
        <authorList>
            <person name="Flores A.R."/>
            <person name="Parsons L.M."/>
            <person name="Pavelka M.S. Jr."/>
        </authorList>
    </citation>
    <scope>DISRUPTION PHENOTYPE</scope>
    <source>
        <strain>ATCC 25618 / H37Rv</strain>
    </source>
</reference>
<reference key="5">
    <citation type="journal article" date="2007" name="Biochemistry">
        <title>Irreversible inhibition of the Mycobacterium tuberculosis beta-lactamase by clavulanate.</title>
        <authorList>
            <person name="Hugonnet J.E."/>
            <person name="Blanchard J.S."/>
        </authorList>
    </citation>
    <scope>FUNCTION</scope>
    <scope>CATALYTIC ACTIVITY</scope>
    <scope>ACTIVITY REGULATION</scope>
    <scope>SUBUNIT</scope>
    <scope>BIOPHYSICOCHEMICAL PROPERTIES</scope>
    <scope>SUBSTRATE SPECIFICITY</scope>
</reference>
<reference key="6">
    <citation type="journal article" date="2011" name="Mol. Cell. Proteomics">
        <title>Proteogenomic analysis of Mycobacterium tuberculosis by high resolution mass spectrometry.</title>
        <authorList>
            <person name="Kelkar D.S."/>
            <person name="Kumar D."/>
            <person name="Kumar P."/>
            <person name="Balakrishnan L."/>
            <person name="Muthusamy B."/>
            <person name="Yadav A.K."/>
            <person name="Shrivastava P."/>
            <person name="Marimuthu A."/>
            <person name="Anand S."/>
            <person name="Sundaram H."/>
            <person name="Kingsbury R."/>
            <person name="Harsha H.C."/>
            <person name="Nair B."/>
            <person name="Prasad T.S."/>
            <person name="Chauhan D.S."/>
            <person name="Katoch K."/>
            <person name="Katoch V.M."/>
            <person name="Kumar P."/>
            <person name="Chaerkady R."/>
            <person name="Ramachandran S."/>
            <person name="Dash D."/>
            <person name="Pandey A."/>
        </authorList>
    </citation>
    <scope>IDENTIFICATION BY MASS SPECTROMETRY [LARGE SCALE ANALYSIS]</scope>
    <source>
        <strain>ATCC 25618 / H37Rv</strain>
    </source>
</reference>
<reference key="7">
    <citation type="journal article" date="2012" name="Nat. Chem.">
        <title>Rapid point-of-care detection of the tuberculosis pathogen using a BlaC-specific fluorogenic probe.</title>
        <authorList>
            <person name="Xie H."/>
            <person name="Mire J."/>
            <person name="Kong Y."/>
            <person name="Chang M."/>
            <person name="Hassounah H.A."/>
            <person name="Thornton C.N."/>
            <person name="Sacchettini J.C."/>
            <person name="Cirillo J.D."/>
            <person name="Rao J."/>
        </authorList>
    </citation>
    <scope>BIOTECHNOLOGY</scope>
</reference>
<reference key="8">
    <citation type="journal article" date="2014" name="Angew. Chem. Int. Ed. Engl.">
        <title>Fluorogenic probes with substitutions at the 2 and 7 positions of cephalosporin are highly BlaC-specific for rapid Mycobacterium tuberculosis detection.</title>
        <authorList>
            <person name="Cheng Y."/>
            <person name="Xie H."/>
            <person name="Sule P."/>
            <person name="Hassounah H."/>
            <person name="Graviss E.A."/>
            <person name="Kong Y."/>
            <person name="Cirillo J.D."/>
            <person name="Rao J."/>
        </authorList>
    </citation>
    <scope>BIOTECHNOLOGY</scope>
</reference>
<reference key="9">
    <citation type="journal article" date="2006" name="Antimicrob. Agents Chemother.">
        <title>Crystal structure and activity studies of the Mycobacterium tuberculosis beta-lactamase reveal its critical role in resistance to beta-lactam antibiotics.</title>
        <authorList>
            <person name="Wang F."/>
            <person name="Cassidy C."/>
            <person name="Sacchettini J.C."/>
        </authorList>
    </citation>
    <scope>X-RAY CRYSTALLOGRAPHY (1.72 ANGSTROMS) OF 41-307</scope>
    <scope>FUNCTION</scope>
    <scope>CATALYTIC ACTIVITY</scope>
    <scope>SUBSTRATE SPECIFICITY</scope>
    <scope>BIOPHYSICOCHEMICAL PROPERTIES</scope>
    <source>
        <strain>ATCC 25618 / H37Rv</strain>
    </source>
</reference>
<reference key="10">
    <citation type="journal article" date="2008" name="Biochemistry">
        <title>Structure of the covalent adduct formed between Mycobacterium tuberculosis beta-lactamase and clavulanate.</title>
        <authorList>
            <person name="Tremblay L.W."/>
            <person name="Hugonnet J.E."/>
            <person name="Blanchard J.S."/>
        </authorList>
    </citation>
    <scope>X-RAY CRYSTALLOGRAPHY (1.70 ANGSTROMS) OF 43-307 IN COVALENT COMPLEX WITH CLAVULANATE INHIBITOR</scope>
    <scope>ACTIVITY REGULATION</scope>
    <source>
        <strain>ATCC 25618 / H37Rv</strain>
    </source>
</reference>
<reference key="11">
    <citation type="journal article" date="2009" name="Science">
        <title>Meropenem-clavulanate is effective against extensively drug-resistant Mycobacterium tuberculosis.</title>
        <authorList>
            <person name="Hugonnet J.E."/>
            <person name="Tremblay L.W."/>
            <person name="Boshoff H.I."/>
            <person name="Barry C.E."/>
            <person name="Blanchard J.S."/>
        </authorList>
    </citation>
    <scope>X-RAY CRYSTALLOGRAPHY (1.80 ANGSTROMS) OF 43-307 IN COVALENT COMPLEX WITH MEROPENEM</scope>
    <scope>FUNCTION</scope>
    <scope>CATALYTIC ACTIVITY</scope>
    <scope>ACTIVITY REGULATION</scope>
    <scope>BIOPHYSICOCHEMICAL PROPERTIES</scope>
</reference>
<reference key="12">
    <citation type="journal article" date="2010" name="Biochemistry">
        <title>Biochemical and structural characterization of Mycobacterium tuberculosis beta-lactamase with the carbapenems ertapenem and doripenem.</title>
        <authorList>
            <person name="Tremblay L.W."/>
            <person name="Fan F."/>
            <person name="Blanchard J.S."/>
        </authorList>
    </citation>
    <scope>X-RAY CRYSTALLOGRAPHY (1.30 ANGSTROMS) OF 43-307 IN COVALENT COMPLEXES WITH CARBAPENEMS</scope>
    <scope>FUNCTION</scope>
    <scope>CATALYTIC ACTIVITY</scope>
    <scope>BIOPHYSICOCHEMICAL PROPERTIES</scope>
    <scope>ACTIVE SITE</scope>
    <scope>REACTION MECHANISM</scope>
</reference>
<reference key="13">
    <citation type="journal article" date="2010" name="Biochemistry">
        <title>Structures of the Michaelis complex (1.2 A) and the covalent acyl intermediate (2.0 A) of cefamandole bound in the active sites of the Mycobacterium tuberculosis beta-lactamase K73A and E166A mutants.</title>
        <authorList>
            <person name="Tremblay L.W."/>
            <person name="Xu H."/>
            <person name="Blanchard J.S."/>
        </authorList>
    </citation>
    <scope>X-RAY CRYSTALLOGRAPHY (1.22 ANGSTROMS) OF 43-307 OF MUTANTS ALA-87 AND ALA-182 IN MICHAELIS COMPLEX AND COVALENT COMPLEX WITH CEFAMANDOLE</scope>
    <scope>ACTIVE SITE</scope>
    <scope>REACTION MECHANISM</scope>
    <scope>MUTAGENESIS OF LYS-87 AND GLU-182</scope>
</reference>
<reference key="14">
    <citation type="journal article" date="2012" name="Biochemistry">
        <title>NXL104 irreversibly inhibits the beta-lactamase from Mycobacterium tuberculosis.</title>
        <authorList>
            <person name="Xu H."/>
            <person name="Hazra S."/>
            <person name="Blanchard J.S."/>
        </authorList>
    </citation>
    <scope>X-RAY CRYSTALLOGRAPHY (2.29 ANGSTROMS) OF 43-307 IN COVALENT COMPLEX WITH NXL104 INHIBITOR</scope>
    <scope>ACTIVITY REGULATION</scope>
</reference>
<reference key="15">
    <citation type="journal article" date="2013" name="Antimicrob. Agents Chemother.">
        <title>Can inhibitor-resistant substitutions in the Mycobacterium tuberculosis beta-Lactamase BlaC lead to clavulanate resistance?: a biochemical rationale for the use of beta-lactam-beta-lactamase inhibitor combinations.</title>
        <authorList>
            <person name="Kurz S.G."/>
            <person name="Wolff K.A."/>
            <person name="Hazra S."/>
            <person name="Bethel C.R."/>
            <person name="Hujer A.M."/>
            <person name="Smith K.M."/>
            <person name="Xu Y."/>
            <person name="Tremblay L.W."/>
            <person name="Blanchard J.S."/>
            <person name="Nguyen L."/>
            <person name="Bonomo R.A."/>
        </authorList>
    </citation>
    <scope>X-RAY CRYSTALLOGRAPHY (2.10 ANGSTROMS) OF 43-307 OF MUTANT ALA-236</scope>
    <scope>ACTIVITY REGULATION</scope>
    <scope>MUTAGENESIS OF SER-142; ARG-236 AND THR-253</scope>
</reference>
<reference key="16">
    <citation type="journal article" date="2013" name="PLoS ONE">
        <title>Directed evolution of Mycobacterium tuberculosis beta-lactamase reveals gatekeeper residue that regulates antibiotic resistance and catalytic efficiency.</title>
        <authorList>
            <person name="Feiler C."/>
            <person name="Fisher A.C."/>
            <person name="Boock J.T."/>
            <person name="Marrichi M.J."/>
            <person name="Wright L."/>
            <person name="Schmidpeter P.A."/>
            <person name="Blankenfeldt W."/>
            <person name="Pavelka M."/>
            <person name="DeLisa M.P."/>
        </authorList>
    </citation>
    <scope>X-RAY CRYSTALLOGRAPHY (2.85 ANGSTROMS) OF 32-307</scope>
    <scope>MUTAGENESIS OF ILE-117</scope>
</reference>
<organism>
    <name type="scientific">Mycobacterium tuberculosis (strain ATCC 25618 / H37Rv)</name>
    <dbReference type="NCBI Taxonomy" id="83332"/>
    <lineage>
        <taxon>Bacteria</taxon>
        <taxon>Bacillati</taxon>
        <taxon>Actinomycetota</taxon>
        <taxon>Actinomycetes</taxon>
        <taxon>Mycobacteriales</taxon>
        <taxon>Mycobacteriaceae</taxon>
        <taxon>Mycobacterium</taxon>
        <taxon>Mycobacterium tuberculosis complex</taxon>
    </lineage>
</organism>
<protein>
    <recommendedName>
        <fullName evidence="16">Beta-lactamase</fullName>
        <ecNumber evidence="5 6 8 9">3.5.2.6</ecNumber>
    </recommendedName>
    <alternativeName>
        <fullName evidence="17">Ambler class A beta-lactamase</fullName>
    </alternativeName>
</protein>
<evidence type="ECO:0000250" key="1">
    <source>
        <dbReference type="UniProtKB" id="A5U493"/>
    </source>
</evidence>
<evidence type="ECO:0000255" key="2">
    <source>
        <dbReference type="PROSITE-ProRule" id="PRU00648"/>
    </source>
</evidence>
<evidence type="ECO:0000269" key="3">
    <source>
    </source>
</evidence>
<evidence type="ECO:0000269" key="4">
    <source>
    </source>
</evidence>
<evidence type="ECO:0000269" key="5">
    <source>
    </source>
</evidence>
<evidence type="ECO:0000269" key="6">
    <source>
    </source>
</evidence>
<evidence type="ECO:0000269" key="7">
    <source>
    </source>
</evidence>
<evidence type="ECO:0000269" key="8">
    <source>
    </source>
</evidence>
<evidence type="ECO:0000269" key="9">
    <source>
    </source>
</evidence>
<evidence type="ECO:0000269" key="10">
    <source>
    </source>
</evidence>
<evidence type="ECO:0000269" key="11">
    <source>
    </source>
</evidence>
<evidence type="ECO:0000269" key="12">
    <source>
    </source>
</evidence>
<evidence type="ECO:0000269" key="13">
    <source>
    </source>
</evidence>
<evidence type="ECO:0000269" key="14">
    <source>
    </source>
</evidence>
<evidence type="ECO:0000269" key="15">
    <source>
    </source>
</evidence>
<evidence type="ECO:0000303" key="16">
    <source>
    </source>
</evidence>
<evidence type="ECO:0000303" key="17">
    <source>
    </source>
</evidence>
<evidence type="ECO:0000303" key="18">
    <source>
    </source>
</evidence>
<evidence type="ECO:0000303" key="19">
    <source>
    </source>
</evidence>
<evidence type="ECO:0000303" key="20">
    <source>
    </source>
</evidence>
<evidence type="ECO:0000305" key="21"/>
<evidence type="ECO:0000305" key="22">
    <source>
    </source>
</evidence>
<evidence type="ECO:0000305" key="23">
    <source>
    </source>
</evidence>
<evidence type="ECO:0007829" key="24">
    <source>
        <dbReference type="PDB" id="3NY4"/>
    </source>
</evidence>
<evidence type="ECO:0007829" key="25">
    <source>
        <dbReference type="PDB" id="3VFH"/>
    </source>
</evidence>
<evidence type="ECO:0007829" key="26">
    <source>
        <dbReference type="PDB" id="5NJ2"/>
    </source>
</evidence>
<evidence type="ECO:0007829" key="27">
    <source>
        <dbReference type="PDB" id="8R88"/>
    </source>
</evidence>
<feature type="signal peptide" description="Tat-type signal" evidence="2">
    <location>
        <begin position="1"/>
        <end position="34"/>
    </location>
</feature>
<feature type="chain" id="PRO_0000017005" description="Beta-lactamase">
    <location>
        <begin position="35"/>
        <end position="307"/>
    </location>
</feature>
<feature type="active site" description="Acyl-ester intermediate" evidence="8 9 10">
    <location>
        <position position="84"/>
    </location>
</feature>
<feature type="active site" description="Proton acceptor" evidence="18 19">
    <location>
        <position position="182"/>
    </location>
</feature>
<feature type="binding site" evidence="8 9 10">
    <location>
        <position position="142"/>
    </location>
    <ligand>
        <name>substrate</name>
    </ligand>
</feature>
<feature type="binding site" evidence="8 9 10">
    <location>
        <begin position="251"/>
        <end position="253"/>
    </location>
    <ligand>
        <name>substrate</name>
    </ligand>
</feature>
<feature type="site" description="Increases nucleophilicity of active site Ser" evidence="18 19">
    <location>
        <position position="87"/>
    </location>
</feature>
<feature type="site" description="Functions as a gatekeeper residue that regulates substrate accessibility to the enzyme active site" evidence="20">
    <location>
        <position position="117"/>
    </location>
</feature>
<feature type="mutagenesis site" description="No longer exported via the Tat-system. Loss of cell resistance to beta-lactam antibiotics." evidence="4">
    <original>RR</original>
    <variation>KK</variation>
    <location>
        <begin position="8"/>
        <end position="9"/>
    </location>
</feature>
<feature type="mutagenesis site" description="200000-fold decrease in catalytic efficiency with cefamandole as substrate." evidence="10">
    <original>K</original>
    <variation>A</variation>
    <location>
        <position position="87"/>
    </location>
</feature>
<feature type="mutagenesis site" description="Significant increase in ampicillin resistance. 2-fold and 3-fold increase in catalytic efficiency with ampicillin and nitrocefin as substrate, respectively, mainly due to an increase in substrate affinity." evidence="13">
    <original>I</original>
    <variation>F</variation>
    <location>
        <position position="117"/>
    </location>
</feature>
<feature type="mutagenesis site" description="Significant reduction of catalytic activity for both nitrocefin and ampicillin. Leads to in vitro clavulanate resistance and decreased susceptibility to carbapenem inhibitors, but is still susceptible to ampicillin-clavulanate in vivo." evidence="14">
    <original>S</original>
    <variation>G</variation>
    <location>
        <position position="142"/>
    </location>
</feature>
<feature type="mutagenesis site" description="Loss of catalytic activity with cefamandole as substrate." evidence="10">
    <original>E</original>
    <variation>A</variation>
    <location>
        <position position="182"/>
    </location>
</feature>
<feature type="mutagenesis site" description="Significant reduction of catalytic activity for both nitrocefin and ampicillin. Leads to in vitro clavulanate resistance and decreased susceptibility to carbapenem inhibitors, but is still susceptible to ampicillin-clavulanate in vivo." evidence="14">
    <original>R</original>
    <variation>A</variation>
    <variation>S</variation>
    <location>
        <position position="236"/>
    </location>
</feature>
<feature type="mutagenesis site" description="Significant reduction of catalytic activity for both nitrocefin and ampicillin. Only minor impairment of the inactivation by clavulanate. Larger increase in resistance to carbapenems." evidence="14">
    <original>T</original>
    <variation>A</variation>
    <location>
        <position position="253"/>
    </location>
</feature>
<feature type="mutagenesis site" description="Only minor impairment of catalytic activity with both nitrocefin and ampicillin. Still inhibited by clavulanate and carbapenems." evidence="14">
    <original>T</original>
    <variation>S</variation>
    <location>
        <position position="253"/>
    </location>
</feature>
<feature type="helix" evidence="26">
    <location>
        <begin position="45"/>
        <end position="55"/>
    </location>
</feature>
<feature type="strand" evidence="26">
    <location>
        <begin position="58"/>
        <end position="63"/>
    </location>
</feature>
<feature type="strand" evidence="24">
    <location>
        <begin position="67"/>
        <end position="69"/>
    </location>
</feature>
<feature type="strand" evidence="26">
    <location>
        <begin position="72"/>
        <end position="75"/>
    </location>
</feature>
<feature type="helix" evidence="26">
    <location>
        <begin position="83"/>
        <end position="86"/>
    </location>
</feature>
<feature type="helix" evidence="26">
    <location>
        <begin position="87"/>
        <end position="97"/>
    </location>
</feature>
<feature type="helix" evidence="26">
    <location>
        <begin position="100"/>
        <end position="104"/>
    </location>
</feature>
<feature type="strand" evidence="27">
    <location>
        <begin position="106"/>
        <end position="110"/>
    </location>
</feature>
<feature type="helix" evidence="26">
    <location>
        <begin position="111"/>
        <end position="113"/>
    </location>
</feature>
<feature type="helix" evidence="26">
    <location>
        <begin position="119"/>
        <end position="124"/>
    </location>
</feature>
<feature type="turn" evidence="26">
    <location>
        <begin position="125"/>
        <end position="127"/>
    </location>
</feature>
<feature type="helix" evidence="26">
    <location>
        <begin position="131"/>
        <end position="140"/>
    </location>
</feature>
<feature type="helix" evidence="26">
    <location>
        <begin position="144"/>
        <end position="155"/>
    </location>
</feature>
<feature type="turn" evidence="26">
    <location>
        <begin position="157"/>
        <end position="159"/>
    </location>
</feature>
<feature type="helix" evidence="26">
    <location>
        <begin position="160"/>
        <end position="170"/>
    </location>
</feature>
<feature type="helix" evidence="26">
    <location>
        <begin position="184"/>
        <end position="186"/>
    </location>
</feature>
<feature type="strand" evidence="25">
    <location>
        <begin position="194"/>
        <end position="197"/>
    </location>
</feature>
<feature type="helix" evidence="26">
    <location>
        <begin position="199"/>
        <end position="210"/>
    </location>
</feature>
<feature type="strand" evidence="26">
    <location>
        <begin position="212"/>
        <end position="215"/>
    </location>
</feature>
<feature type="helix" evidence="26">
    <location>
        <begin position="217"/>
        <end position="228"/>
    </location>
</feature>
<feature type="turn" evidence="26">
    <location>
        <begin position="234"/>
        <end position="236"/>
    </location>
</feature>
<feature type="helix" evidence="26">
    <location>
        <begin position="237"/>
        <end position="240"/>
    </location>
</feature>
<feature type="strand" evidence="26">
    <location>
        <begin position="245"/>
        <end position="254"/>
    </location>
</feature>
<feature type="turn" evidence="26">
    <location>
        <begin position="255"/>
        <end position="257"/>
    </location>
</feature>
<feature type="strand" evidence="26">
    <location>
        <begin position="258"/>
        <end position="266"/>
    </location>
</feature>
<feature type="strand" evidence="26">
    <location>
        <begin position="272"/>
        <end position="280"/>
    </location>
</feature>
<feature type="helix" evidence="26">
    <location>
        <begin position="282"/>
        <end position="284"/>
    </location>
</feature>
<feature type="helix" evidence="26">
    <location>
        <begin position="292"/>
        <end position="307"/>
    </location>
</feature>
<comment type="function">
    <text evidence="3 5 6 8 9">Extended spectrum beta-lactamase (ESBL) that inactivates beta-lactam antibiotics by hydrolyzing the amide group of the beta-lactam ring. Displays high levels of penicillinase and cephalosporinase activity as well as measurable activity with carbapenems, including imipenem and meropenem. Plays a primary role in the intrinsic resistance of M.tuberculosis to beta-lactam antibiotics.</text>
</comment>
<comment type="catalytic activity">
    <reaction evidence="5 6 8 9">
        <text>a beta-lactam + H2O = a substituted beta-amino acid</text>
        <dbReference type="Rhea" id="RHEA:20401"/>
        <dbReference type="ChEBI" id="CHEBI:15377"/>
        <dbReference type="ChEBI" id="CHEBI:35627"/>
        <dbReference type="ChEBI" id="CHEBI:140347"/>
        <dbReference type="EC" id="3.5.2.6"/>
    </reaction>
</comment>
<comment type="activity regulation">
    <text evidence="6 7 8 11 14">Is inhibited by sulbactam, tazobactam, and clavulanate. Sulbactam inhibits the enzyme competitively and reversibly with respect to nitrocefin. Tazobactam inhibits the enzyme in a time-dependent manner, but the activity of the enzyme reappears due to the slow hydrolysis of the covalently acylated enzyme. In contrast, clavulanate reacts with the enzyme quickly to form hydrolytically stable, inactive forms of the enzyme, via irreversible acylation of the catalytic serine residue. Clavulanate has potential to be used in combination with approved beta-lactam antibiotics to treat multi-drug resistant (MDR) and extremely drug resistant (XDR) strains of M.tuberculosis. Is also irreversibly inhibited by NXL104, which forms an extremely stable carbamoyl adduct with the enzyme but shows an inhibition efficiency more than 100-fold lower than that of clavulanate. Is inhibited by carbapenems, that are very poor substrates for the enzyme.</text>
</comment>
<comment type="biophysicochemical properties">
    <kinetics>
        <KM evidence="6">8 uM for ampicillin (at pH 6.4)</KM>
        <KM evidence="6">22 uM for amoxicillin (at pH 6.4)</KM>
        <KM evidence="6">19 uM for penicillin G (at pH 6.4)</KM>
        <KM evidence="6">69 uM for penicillin V (at pH 6.4)</KM>
        <KM evidence="6">59 uM for piperacillin (at pH 6.4)</KM>
        <KM evidence="6">114 uM for cephalosporin C (at pH 6.4)</KM>
        <KM evidence="6">152 uM for cephalotin (at pH 6.4)</KM>
        <KM evidence="6">5100 uM for cefuroxime (at pH 6.4)</KM>
        <KM evidence="6">184 uM for cefamandole (at pH 6.4)</KM>
        <KM evidence="6">127 uM for cefoxitin (at pH 6.4)</KM>
        <KM evidence="6">280 uM for ceftazidime (at pH 6.4)</KM>
        <KM evidence="6">520 uM for ceftriaxone (at pH 6.4)</KM>
        <KM evidence="6">5570 uM for cefotaxime (at pH 6.4)</KM>
        <KM evidence="6">57 uM for nitrocefin (at pH 6.4)</KM>
        <KM evidence="6">195 uM for CENTA (at pH 6.4)</KM>
        <KM evidence="6">9.4 uM for imipenem (at pH 6.4)</KM>
        <KM evidence="6">3.4 uM for meropenem (at pH 6.4)</KM>
        <KM evidence="5">63 uM for ampicillin (at pH 7.5)</KM>
        <KM evidence="5">117 uM for cephalotin (at pH 7.5)</KM>
        <KM evidence="5">195 uM for cefoxitin (at pH 7.5)</KM>
        <KM evidence="5">593 uM for ceftazidime (at pH 7.5)</KM>
        <KM evidence="5">279 uM for meropenem (at pH 7.5)</KM>
        <KM evidence="8">3.4 uM for meropenem (at pH 6.5)</KM>
        <KM evidence="9">0.18 uM for doripenem (at pH 6.5)</KM>
        <KM evidence="9">0.18 uM for ertapenem (at pH 6.5)</KM>
        <KM evidence="9">55 uM for faropenem (at pH 6.5)</KM>
        <text evidence="5 6 8 9">kcat is 600 min(-1) with ampicillin as substrate. kcat is 340 min(-1) with amoxicillin as substrate. kcat is 560 min(-1) with penicillin G as substrate. kcat is 2100 min(-1) with penicillin V as substrate. kcat is 690 min(-1) with piperacillin as substrate. kcat is 1070 min(-1) with cephalosporin C as substrate. kcat is 490 min(-1) with cephalotin as substrate. kcat is 490 min(-1) with cefuroxime as substrate. kcat is 3500 min(-1) with cefamandole as substrate. kcat is 48 min(-1) with cefoxitin as substrate. kcat is 2.0 min(-1) with ceftazidime as substrate. kcat is 49 min(-1) with ceftriaxone as substrate. kcat is 380 min(-1) with cefotaxime as substrate. kcat is 6680 min(-1) with nitrocefin as substrate. kcat is 1770 min(-1) with CENTA as substrate. kcat is 10 min(-1) with imipenem as substrate. kcat is 0.08 min(-1) with meropenem as substrate. Assays above performed at pH 6.4. kcat is 18.5 sec(-1) with ampicillin as substrate. kcat is 12.1 sec(-1) with cephalotin as substrate. kcat is 1.1 sec(-1) with cefoxitin as substrate. kcat is 0.2 sec(-1) with ceftazidime as substrate. kcat is 0.9 sec(-1) with meropenem as substrate. Assays above performed at pH 7.5. kcat is 0.08 min(-1) with meropenem as substrate at pH 6.5. kcat is 0.016 min(-1) with doripenem as substrate. kcat is 0.017 min(-1) with ertapenem as substrate. kcat is 0.65 min(-1) with faropenem as substrate. Assays above performed at pH 6.5.</text>
    </kinetics>
</comment>
<comment type="subunit">
    <text evidence="6">Monomer.</text>
</comment>
<comment type="subcellular location">
    <subcellularLocation>
        <location evidence="16">Cell inner membrane</location>
    </subcellularLocation>
    <subcellularLocation>
        <location evidence="22">Periplasm</location>
    </subcellularLocation>
    <subcellularLocation>
        <location evidence="1">Secreted</location>
    </subcellularLocation>
</comment>
<comment type="induction">
    <text evidence="20">Constitutively expressed.</text>
</comment>
<comment type="PTM">
    <text evidence="4">Exported by the Tat system. The position of the signal peptide cleavage has not been experimentally proven.</text>
</comment>
<comment type="disruption phenotype">
    <text evidence="3">Cells lacking this gene become significantly more susceptible (16- to 32-fold) to penicillins as well as third-generation cephalosporins and carbapenems. They have no detectable beta-lactamase activity.</text>
</comment>
<comment type="biotechnology">
    <text evidence="12 15">Can be used as a biomarker, which together with BlaC-specific fluorogenic substrates, allows a rapid and accurate detection of very low numbers of M.tuberculosis for the clinical diagnosis of tuberculosis in sputum and other specimens.</text>
</comment>
<comment type="miscellaneous">
    <text evidence="23">The class A beta-lactamase family has a specific amino-acid numbering system, sometimes called Ambler or ABL numbering and often misspelt as Amber. A multiple sequence alignment was used to derive a consensus sequence and then the consensus was numbered taking into account insertions and deletions. This allows use of identical numbers, e.g. for active site residues, despite differences in protein length. UniProt always uses natural numbering of residues, hence there appear to be differences in numbering between this entry and some papers.</text>
</comment>
<comment type="similarity">
    <text evidence="21">Belongs to the class-A beta-lactamase family.</text>
</comment>